<evidence type="ECO:0000255" key="1">
    <source>
        <dbReference type="HAMAP-Rule" id="MF_01077"/>
    </source>
</evidence>
<reference key="1">
    <citation type="submission" date="2008-12" db="EMBL/GenBank/DDBJ databases">
        <title>Complete sequence of chromosome of Shewanella baltica OS223.</title>
        <authorList>
            <consortium name="US DOE Joint Genome Institute"/>
            <person name="Lucas S."/>
            <person name="Copeland A."/>
            <person name="Lapidus A."/>
            <person name="Glavina del Rio T."/>
            <person name="Dalin E."/>
            <person name="Tice H."/>
            <person name="Bruce D."/>
            <person name="Goodwin L."/>
            <person name="Pitluck S."/>
            <person name="Chertkov O."/>
            <person name="Meincke L."/>
            <person name="Brettin T."/>
            <person name="Detter J.C."/>
            <person name="Han C."/>
            <person name="Kuske C.R."/>
            <person name="Larimer F."/>
            <person name="Land M."/>
            <person name="Hauser L."/>
            <person name="Kyrpides N."/>
            <person name="Ovchinnikova G."/>
            <person name="Brettar I."/>
            <person name="Rodrigues J."/>
            <person name="Konstantinidis K."/>
            <person name="Tiedje J."/>
        </authorList>
    </citation>
    <scope>NUCLEOTIDE SEQUENCE [LARGE SCALE GENOMIC DNA]</scope>
    <source>
        <strain>OS223</strain>
    </source>
</reference>
<proteinExistence type="inferred from homology"/>
<sequence>MATLEFRLAEMLKVPVEALGFQLWGIEYVQAGKHSTLRVFIDGENGINIEDCANASRQVSAVLDVEDPISTEYTLEVSSPGVDRPLFTAEQYAGYVGEDVKLQLTMPVDGSRNLKGAITAVDGQMLSLKVNGKELVVALDNIRKGNLIAKF</sequence>
<organism>
    <name type="scientific">Shewanella baltica (strain OS223)</name>
    <dbReference type="NCBI Taxonomy" id="407976"/>
    <lineage>
        <taxon>Bacteria</taxon>
        <taxon>Pseudomonadati</taxon>
        <taxon>Pseudomonadota</taxon>
        <taxon>Gammaproteobacteria</taxon>
        <taxon>Alteromonadales</taxon>
        <taxon>Shewanellaceae</taxon>
        <taxon>Shewanella</taxon>
    </lineage>
</organism>
<name>RIMP_SHEB2</name>
<gene>
    <name evidence="1" type="primary">rimP</name>
    <name type="ordered locus">Sbal223_1126</name>
</gene>
<comment type="function">
    <text evidence="1">Required for maturation of 30S ribosomal subunits.</text>
</comment>
<comment type="subcellular location">
    <subcellularLocation>
        <location evidence="1">Cytoplasm</location>
    </subcellularLocation>
</comment>
<comment type="similarity">
    <text evidence="1">Belongs to the RimP family.</text>
</comment>
<protein>
    <recommendedName>
        <fullName evidence="1">Ribosome maturation factor RimP</fullName>
    </recommendedName>
</protein>
<accession>B8E6N0</accession>
<keyword id="KW-0963">Cytoplasm</keyword>
<keyword id="KW-0690">Ribosome biogenesis</keyword>
<dbReference type="EMBL" id="CP001252">
    <property type="protein sequence ID" value="ACK45641.1"/>
    <property type="molecule type" value="Genomic_DNA"/>
</dbReference>
<dbReference type="RefSeq" id="WP_006082718.1">
    <property type="nucleotide sequence ID" value="NC_011663.1"/>
</dbReference>
<dbReference type="SMR" id="B8E6N0"/>
<dbReference type="GeneID" id="11773460"/>
<dbReference type="KEGG" id="sbp:Sbal223_1126"/>
<dbReference type="HOGENOM" id="CLU_070525_1_1_6"/>
<dbReference type="Proteomes" id="UP000002507">
    <property type="component" value="Chromosome"/>
</dbReference>
<dbReference type="GO" id="GO:0005829">
    <property type="term" value="C:cytosol"/>
    <property type="evidence" value="ECO:0007669"/>
    <property type="project" value="TreeGrafter"/>
</dbReference>
<dbReference type="GO" id="GO:0000028">
    <property type="term" value="P:ribosomal small subunit assembly"/>
    <property type="evidence" value="ECO:0007669"/>
    <property type="project" value="TreeGrafter"/>
</dbReference>
<dbReference type="GO" id="GO:0006412">
    <property type="term" value="P:translation"/>
    <property type="evidence" value="ECO:0007669"/>
    <property type="project" value="TreeGrafter"/>
</dbReference>
<dbReference type="CDD" id="cd01734">
    <property type="entry name" value="YlxS_C"/>
    <property type="match status" value="1"/>
</dbReference>
<dbReference type="FunFam" id="2.30.30.180:FF:000001">
    <property type="entry name" value="Ribosome maturation factor RimP"/>
    <property type="match status" value="1"/>
</dbReference>
<dbReference type="FunFam" id="3.30.300.70:FF:000001">
    <property type="entry name" value="Ribosome maturation factor RimP"/>
    <property type="match status" value="1"/>
</dbReference>
<dbReference type="Gene3D" id="2.30.30.180">
    <property type="entry name" value="Ribosome maturation factor RimP, C-terminal domain"/>
    <property type="match status" value="1"/>
</dbReference>
<dbReference type="Gene3D" id="3.30.300.70">
    <property type="entry name" value="RimP-like superfamily, N-terminal"/>
    <property type="match status" value="1"/>
</dbReference>
<dbReference type="HAMAP" id="MF_01077">
    <property type="entry name" value="RimP"/>
    <property type="match status" value="1"/>
</dbReference>
<dbReference type="InterPro" id="IPR003728">
    <property type="entry name" value="Ribosome_maturation_RimP"/>
</dbReference>
<dbReference type="InterPro" id="IPR028998">
    <property type="entry name" value="RimP_C"/>
</dbReference>
<dbReference type="InterPro" id="IPR036847">
    <property type="entry name" value="RimP_C_sf"/>
</dbReference>
<dbReference type="InterPro" id="IPR028989">
    <property type="entry name" value="RimP_N"/>
</dbReference>
<dbReference type="InterPro" id="IPR035956">
    <property type="entry name" value="RimP_N_sf"/>
</dbReference>
<dbReference type="NCBIfam" id="NF000927">
    <property type="entry name" value="PRK00092.1-1"/>
    <property type="match status" value="1"/>
</dbReference>
<dbReference type="PANTHER" id="PTHR33867">
    <property type="entry name" value="RIBOSOME MATURATION FACTOR RIMP"/>
    <property type="match status" value="1"/>
</dbReference>
<dbReference type="PANTHER" id="PTHR33867:SF1">
    <property type="entry name" value="RIBOSOME MATURATION FACTOR RIMP"/>
    <property type="match status" value="1"/>
</dbReference>
<dbReference type="Pfam" id="PF17384">
    <property type="entry name" value="DUF150_C"/>
    <property type="match status" value="1"/>
</dbReference>
<dbReference type="Pfam" id="PF02576">
    <property type="entry name" value="RimP_N"/>
    <property type="match status" value="1"/>
</dbReference>
<dbReference type="SUPFAM" id="SSF74942">
    <property type="entry name" value="YhbC-like, C-terminal domain"/>
    <property type="match status" value="1"/>
</dbReference>
<dbReference type="SUPFAM" id="SSF75420">
    <property type="entry name" value="YhbC-like, N-terminal domain"/>
    <property type="match status" value="1"/>
</dbReference>
<feature type="chain" id="PRO_1000149804" description="Ribosome maturation factor RimP">
    <location>
        <begin position="1"/>
        <end position="151"/>
    </location>
</feature>